<gene>
    <name evidence="1" type="primary">psaJ</name>
    <name type="ordered locus">CYA_0294</name>
</gene>
<name>PSAJ_SYNJA</name>
<sequence>MSDFTKFLTTAPVAFILFSSFVFALFIEINRFFPDILTF</sequence>
<comment type="function">
    <text evidence="1">May help in the organization of the PsaE and PsaF subunits.</text>
</comment>
<comment type="subcellular location">
    <subcellularLocation>
        <location evidence="1">Cellular thylakoid membrane</location>
        <topology evidence="1">Single-pass membrane protein</topology>
    </subcellularLocation>
</comment>
<comment type="similarity">
    <text evidence="1">Belongs to the PsaJ family.</text>
</comment>
<keyword id="KW-0472">Membrane</keyword>
<keyword id="KW-0602">Photosynthesis</keyword>
<keyword id="KW-0603">Photosystem I</keyword>
<keyword id="KW-0793">Thylakoid</keyword>
<keyword id="KW-0812">Transmembrane</keyword>
<keyword id="KW-1133">Transmembrane helix</keyword>
<dbReference type="EMBL" id="CP000239">
    <property type="protein sequence ID" value="ABC98515.1"/>
    <property type="molecule type" value="Genomic_DNA"/>
</dbReference>
<dbReference type="RefSeq" id="WP_011429204.1">
    <property type="nucleotide sequence ID" value="NC_007775.1"/>
</dbReference>
<dbReference type="SMR" id="Q2JXH1"/>
<dbReference type="STRING" id="321327.CYA_0294"/>
<dbReference type="KEGG" id="cya:CYA_0294"/>
<dbReference type="eggNOG" id="ENOG5032PDU">
    <property type="taxonomic scope" value="Bacteria"/>
</dbReference>
<dbReference type="HOGENOM" id="CLU_212133_1_0_3"/>
<dbReference type="OrthoDB" id="532702at2"/>
<dbReference type="Proteomes" id="UP000008818">
    <property type="component" value="Chromosome"/>
</dbReference>
<dbReference type="GO" id="GO:0009522">
    <property type="term" value="C:photosystem I"/>
    <property type="evidence" value="ECO:0007669"/>
    <property type="project" value="UniProtKB-KW"/>
</dbReference>
<dbReference type="GO" id="GO:0031676">
    <property type="term" value="C:plasma membrane-derived thylakoid membrane"/>
    <property type="evidence" value="ECO:0007669"/>
    <property type="project" value="UniProtKB-SubCell"/>
</dbReference>
<dbReference type="GO" id="GO:0015979">
    <property type="term" value="P:photosynthesis"/>
    <property type="evidence" value="ECO:0007669"/>
    <property type="project" value="UniProtKB-UniRule"/>
</dbReference>
<dbReference type="Gene3D" id="1.20.5.510">
    <property type="entry name" value="Single helix bin"/>
    <property type="match status" value="1"/>
</dbReference>
<dbReference type="HAMAP" id="MF_00522">
    <property type="entry name" value="PSI_PsaJ"/>
    <property type="match status" value="1"/>
</dbReference>
<dbReference type="InterPro" id="IPR002615">
    <property type="entry name" value="PSI_PsaJ"/>
</dbReference>
<dbReference type="InterPro" id="IPR036062">
    <property type="entry name" value="PSI_PsaJ_sf"/>
</dbReference>
<dbReference type="Pfam" id="PF01701">
    <property type="entry name" value="PSI_PsaJ"/>
    <property type="match status" value="1"/>
</dbReference>
<dbReference type="SUPFAM" id="SSF81544">
    <property type="entry name" value="Subunit IX of photosystem I reaction centre, PsaJ"/>
    <property type="match status" value="1"/>
</dbReference>
<proteinExistence type="inferred from homology"/>
<accession>Q2JXH1</accession>
<feature type="chain" id="PRO_0000354121" description="Photosystem I reaction center subunit IX">
    <location>
        <begin position="1"/>
        <end position="39"/>
    </location>
</feature>
<feature type="transmembrane region" description="Helical" evidence="1">
    <location>
        <begin position="7"/>
        <end position="27"/>
    </location>
</feature>
<reference key="1">
    <citation type="journal article" date="2007" name="ISME J.">
        <title>Population level functional diversity in a microbial community revealed by comparative genomic and metagenomic analyses.</title>
        <authorList>
            <person name="Bhaya D."/>
            <person name="Grossman A.R."/>
            <person name="Steunou A.-S."/>
            <person name="Khuri N."/>
            <person name="Cohan F.M."/>
            <person name="Hamamura N."/>
            <person name="Melendrez M.C."/>
            <person name="Bateson M.M."/>
            <person name="Ward D.M."/>
            <person name="Heidelberg J.F."/>
        </authorList>
    </citation>
    <scope>NUCLEOTIDE SEQUENCE [LARGE SCALE GENOMIC DNA]</scope>
    <source>
        <strain>JA-3-3Ab</strain>
    </source>
</reference>
<evidence type="ECO:0000255" key="1">
    <source>
        <dbReference type="HAMAP-Rule" id="MF_00522"/>
    </source>
</evidence>
<protein>
    <recommendedName>
        <fullName evidence="1">Photosystem I reaction center subunit IX</fullName>
    </recommendedName>
</protein>
<organism>
    <name type="scientific">Synechococcus sp. (strain JA-3-3Ab)</name>
    <name type="common">Cyanobacteria bacterium Yellowstone A-Prime</name>
    <dbReference type="NCBI Taxonomy" id="321327"/>
    <lineage>
        <taxon>Bacteria</taxon>
        <taxon>Bacillati</taxon>
        <taxon>Cyanobacteriota</taxon>
        <taxon>Cyanophyceae</taxon>
        <taxon>Synechococcales</taxon>
        <taxon>Synechococcaceae</taxon>
        <taxon>Synechococcus</taxon>
    </lineage>
</organism>